<protein>
    <recommendedName>
        <fullName>Pre-rRNA-processing protein ipi1</fullName>
    </recommendedName>
</protein>
<accession>Q2UU13</accession>
<gene>
    <name type="primary">ipi1</name>
    <name type="ORF">AO090009000506</name>
</gene>
<proteinExistence type="inferred from homology"/>
<feature type="chain" id="PRO_0000308715" description="Pre-rRNA-processing protein ipi1">
    <location>
        <begin position="1"/>
        <end position="369"/>
    </location>
</feature>
<feature type="region of interest" description="Disordered" evidence="2">
    <location>
        <begin position="1"/>
        <end position="33"/>
    </location>
</feature>
<feature type="region of interest" description="Disordered" evidence="2">
    <location>
        <begin position="349"/>
        <end position="369"/>
    </location>
</feature>
<feature type="compositionally biased region" description="Basic residues" evidence="2">
    <location>
        <begin position="1"/>
        <end position="10"/>
    </location>
</feature>
<name>IPI1_ASPOR</name>
<evidence type="ECO:0000250" key="1">
    <source>
        <dbReference type="UniProtKB" id="P38803"/>
    </source>
</evidence>
<evidence type="ECO:0000256" key="2">
    <source>
        <dbReference type="SAM" id="MobiDB-lite"/>
    </source>
</evidence>
<evidence type="ECO:0000305" key="3"/>
<reference key="1">
    <citation type="journal article" date="2005" name="Nature">
        <title>Genome sequencing and analysis of Aspergillus oryzae.</title>
        <authorList>
            <person name="Machida M."/>
            <person name="Asai K."/>
            <person name="Sano M."/>
            <person name="Tanaka T."/>
            <person name="Kumagai T."/>
            <person name="Terai G."/>
            <person name="Kusumoto K."/>
            <person name="Arima T."/>
            <person name="Akita O."/>
            <person name="Kashiwagi Y."/>
            <person name="Abe K."/>
            <person name="Gomi K."/>
            <person name="Horiuchi H."/>
            <person name="Kitamoto K."/>
            <person name="Kobayashi T."/>
            <person name="Takeuchi M."/>
            <person name="Denning D.W."/>
            <person name="Galagan J.E."/>
            <person name="Nierman W.C."/>
            <person name="Yu J."/>
            <person name="Archer D.B."/>
            <person name="Bennett J.W."/>
            <person name="Bhatnagar D."/>
            <person name="Cleveland T.E."/>
            <person name="Fedorova N.D."/>
            <person name="Gotoh O."/>
            <person name="Horikawa H."/>
            <person name="Hosoyama A."/>
            <person name="Ichinomiya M."/>
            <person name="Igarashi R."/>
            <person name="Iwashita K."/>
            <person name="Juvvadi P.R."/>
            <person name="Kato M."/>
            <person name="Kato Y."/>
            <person name="Kin T."/>
            <person name="Kokubun A."/>
            <person name="Maeda H."/>
            <person name="Maeyama N."/>
            <person name="Maruyama J."/>
            <person name="Nagasaki H."/>
            <person name="Nakajima T."/>
            <person name="Oda K."/>
            <person name="Okada K."/>
            <person name="Paulsen I."/>
            <person name="Sakamoto K."/>
            <person name="Sawano T."/>
            <person name="Takahashi M."/>
            <person name="Takase K."/>
            <person name="Terabayashi Y."/>
            <person name="Wortman J.R."/>
            <person name="Yamada O."/>
            <person name="Yamagata Y."/>
            <person name="Anazawa H."/>
            <person name="Hata Y."/>
            <person name="Koide Y."/>
            <person name="Komori T."/>
            <person name="Koyama Y."/>
            <person name="Minetoki T."/>
            <person name="Suharnan S."/>
            <person name="Tanaka A."/>
            <person name="Isono K."/>
            <person name="Kuhara S."/>
            <person name="Ogasawara N."/>
            <person name="Kikuchi H."/>
        </authorList>
    </citation>
    <scope>NUCLEOTIDE SEQUENCE [LARGE SCALE GENOMIC DNA]</scope>
    <source>
        <strain>ATCC 42149 / RIB 40</strain>
    </source>
</reference>
<keyword id="KW-0539">Nucleus</keyword>
<keyword id="KW-1185">Reference proteome</keyword>
<keyword id="KW-0690">Ribosome biogenesis</keyword>
<keyword id="KW-0698">rRNA processing</keyword>
<comment type="function">
    <text evidence="1">Component of the RIX1 complex required for processing of ITS2 sequences from 35S pre-rRNA.</text>
</comment>
<comment type="subunit">
    <text evidence="1">Component of the RIX1 complex, composed of ipi1, rix1/ipi2 and ipi3 in a 1:2:2 stoichiometry. The complex interacts (via rix1) with mdn1 (via its hexameric AAA ATPase ring) and the pre-60S ribosome particles.</text>
</comment>
<comment type="subcellular location">
    <subcellularLocation>
        <location evidence="1">Nucleus</location>
    </subcellularLocation>
</comment>
<comment type="similarity">
    <text evidence="3">Belongs to the IPI1/TEX10 family.</text>
</comment>
<dbReference type="EMBL" id="BA000049">
    <property type="protein sequence ID" value="BAE54952.1"/>
    <property type="molecule type" value="Genomic_DNA"/>
</dbReference>
<dbReference type="SMR" id="Q2UU13"/>
<dbReference type="STRING" id="510516.Q2UU13"/>
<dbReference type="EnsemblFungi" id="BAE54952">
    <property type="protein sequence ID" value="BAE54952"/>
    <property type="gene ID" value="AO090009000506"/>
</dbReference>
<dbReference type="VEuPathDB" id="FungiDB:AO090009000506"/>
<dbReference type="HOGENOM" id="CLU_050252_2_0_1"/>
<dbReference type="OMA" id="CAGGWVK"/>
<dbReference type="Proteomes" id="UP000006564">
    <property type="component" value="Chromosome 1"/>
</dbReference>
<dbReference type="GO" id="GO:0005634">
    <property type="term" value="C:nucleus"/>
    <property type="evidence" value="ECO:0007669"/>
    <property type="project" value="UniProtKB-SubCell"/>
</dbReference>
<dbReference type="GO" id="GO:0120330">
    <property type="term" value="C:rixosome complex"/>
    <property type="evidence" value="ECO:0007669"/>
    <property type="project" value="TreeGrafter"/>
</dbReference>
<dbReference type="GO" id="GO:0006364">
    <property type="term" value="P:rRNA processing"/>
    <property type="evidence" value="ECO:0007669"/>
    <property type="project" value="UniProtKB-KW"/>
</dbReference>
<dbReference type="Gene3D" id="1.25.10.10">
    <property type="entry name" value="Leucine-rich Repeat Variant"/>
    <property type="match status" value="1"/>
</dbReference>
<dbReference type="InterPro" id="IPR011989">
    <property type="entry name" value="ARM-like"/>
</dbReference>
<dbReference type="InterPro" id="IPR016024">
    <property type="entry name" value="ARM-type_fold"/>
</dbReference>
<dbReference type="InterPro" id="IPR024679">
    <property type="entry name" value="Ipi1_N"/>
</dbReference>
<dbReference type="PANTHER" id="PTHR16056">
    <property type="entry name" value="REGULATOR OF MICROTUBULE DYNAMICS PROTEIN"/>
    <property type="match status" value="1"/>
</dbReference>
<dbReference type="PANTHER" id="PTHR16056:SF2">
    <property type="entry name" value="TESTIS-EXPRESSED PROTEIN 10"/>
    <property type="match status" value="1"/>
</dbReference>
<dbReference type="Pfam" id="PF12333">
    <property type="entry name" value="Ipi1_N"/>
    <property type="match status" value="1"/>
</dbReference>
<dbReference type="SUPFAM" id="SSF48371">
    <property type="entry name" value="ARM repeat"/>
    <property type="match status" value="1"/>
</dbReference>
<sequence>MGSSAKKKKEKQKDFTKAKLKVGKAKGKPENFTDTSFKSKGIVLNQQSLTLNAPTSNTQFTHHVSLLSSKSDSQRRDSLAHLTTSISSRPVNSPLPQPVSVILPTLLPLILDANTGVRTQLLKLFRALPQSDIRDHVPQLLPYIRAGMTHLAADIRVSAVEVLSWLIDVAGTEVVSSAGGWIKTLNCFLSVLGWHTEESAKWSANRASFGKSGAKGQPMMKVLTVLAEFLNAGIGAPANEAQDVDMLGSGGVAGWEFPLCQTAVHMVPDTAAPYAYLNLFGQPRDEEGEMYETWEDRYRVFSNRFLRAIQRGLENARQEGGEMGRASSGASKVLKEAVAYGTGIADRDIVSSHDSTSRGTSIHDLEPKE</sequence>
<organism>
    <name type="scientific">Aspergillus oryzae (strain ATCC 42149 / RIB 40)</name>
    <name type="common">Yellow koji mold</name>
    <dbReference type="NCBI Taxonomy" id="510516"/>
    <lineage>
        <taxon>Eukaryota</taxon>
        <taxon>Fungi</taxon>
        <taxon>Dikarya</taxon>
        <taxon>Ascomycota</taxon>
        <taxon>Pezizomycotina</taxon>
        <taxon>Eurotiomycetes</taxon>
        <taxon>Eurotiomycetidae</taxon>
        <taxon>Eurotiales</taxon>
        <taxon>Aspergillaceae</taxon>
        <taxon>Aspergillus</taxon>
        <taxon>Aspergillus subgen. Circumdati</taxon>
    </lineage>
</organism>